<keyword id="KW-0687">Ribonucleoprotein</keyword>
<keyword id="KW-0689">Ribosomal protein</keyword>
<keyword id="KW-0694">RNA-binding</keyword>
<keyword id="KW-0699">rRNA-binding</keyword>
<accession>B7JNV4</accession>
<organism>
    <name type="scientific">Bacillus cereus (strain AH820)</name>
    <dbReference type="NCBI Taxonomy" id="405535"/>
    <lineage>
        <taxon>Bacteria</taxon>
        <taxon>Bacillati</taxon>
        <taxon>Bacillota</taxon>
        <taxon>Bacilli</taxon>
        <taxon>Bacillales</taxon>
        <taxon>Bacillaceae</taxon>
        <taxon>Bacillus</taxon>
        <taxon>Bacillus cereus group</taxon>
    </lineage>
</organism>
<sequence>MANIKSAIKRAKLSEERRAHNASIKSDMRSAVKTVEALVTNNDLENAKEAFKTASKKLDKAARKGLIHQNAAARQKSRLAKQVNA</sequence>
<feature type="chain" id="PRO_1000126397" description="Small ribosomal subunit protein bS20">
    <location>
        <begin position="1"/>
        <end position="85"/>
    </location>
</feature>
<feature type="region of interest" description="Disordered" evidence="2">
    <location>
        <begin position="1"/>
        <end position="25"/>
    </location>
</feature>
<dbReference type="EMBL" id="CP001283">
    <property type="protein sequence ID" value="ACK88233.1"/>
    <property type="molecule type" value="Genomic_DNA"/>
</dbReference>
<dbReference type="RefSeq" id="WP_001274011.1">
    <property type="nucleotide sequence ID" value="NC_011773.1"/>
</dbReference>
<dbReference type="SMR" id="B7JNV4"/>
<dbReference type="GeneID" id="93006778"/>
<dbReference type="KEGG" id="bcu:BCAH820_4344"/>
<dbReference type="HOGENOM" id="CLU_160655_1_0_9"/>
<dbReference type="Proteomes" id="UP000001363">
    <property type="component" value="Chromosome"/>
</dbReference>
<dbReference type="GO" id="GO:0005829">
    <property type="term" value="C:cytosol"/>
    <property type="evidence" value="ECO:0007669"/>
    <property type="project" value="TreeGrafter"/>
</dbReference>
<dbReference type="GO" id="GO:0015935">
    <property type="term" value="C:small ribosomal subunit"/>
    <property type="evidence" value="ECO:0007669"/>
    <property type="project" value="TreeGrafter"/>
</dbReference>
<dbReference type="GO" id="GO:0070181">
    <property type="term" value="F:small ribosomal subunit rRNA binding"/>
    <property type="evidence" value="ECO:0007669"/>
    <property type="project" value="TreeGrafter"/>
</dbReference>
<dbReference type="GO" id="GO:0003735">
    <property type="term" value="F:structural constituent of ribosome"/>
    <property type="evidence" value="ECO:0007669"/>
    <property type="project" value="InterPro"/>
</dbReference>
<dbReference type="GO" id="GO:0006412">
    <property type="term" value="P:translation"/>
    <property type="evidence" value="ECO:0007669"/>
    <property type="project" value="UniProtKB-UniRule"/>
</dbReference>
<dbReference type="FunFam" id="1.20.58.110:FF:000001">
    <property type="entry name" value="30S ribosomal protein S20"/>
    <property type="match status" value="1"/>
</dbReference>
<dbReference type="Gene3D" id="1.20.58.110">
    <property type="entry name" value="Ribosomal protein S20"/>
    <property type="match status" value="1"/>
</dbReference>
<dbReference type="HAMAP" id="MF_00500">
    <property type="entry name" value="Ribosomal_bS20"/>
    <property type="match status" value="1"/>
</dbReference>
<dbReference type="InterPro" id="IPR002583">
    <property type="entry name" value="Ribosomal_bS20"/>
</dbReference>
<dbReference type="InterPro" id="IPR036510">
    <property type="entry name" value="Ribosomal_bS20_sf"/>
</dbReference>
<dbReference type="NCBIfam" id="TIGR00029">
    <property type="entry name" value="S20"/>
    <property type="match status" value="1"/>
</dbReference>
<dbReference type="PANTHER" id="PTHR33398">
    <property type="entry name" value="30S RIBOSOMAL PROTEIN S20"/>
    <property type="match status" value="1"/>
</dbReference>
<dbReference type="PANTHER" id="PTHR33398:SF1">
    <property type="entry name" value="SMALL RIBOSOMAL SUBUNIT PROTEIN BS20C"/>
    <property type="match status" value="1"/>
</dbReference>
<dbReference type="Pfam" id="PF01649">
    <property type="entry name" value="Ribosomal_S20p"/>
    <property type="match status" value="1"/>
</dbReference>
<dbReference type="SUPFAM" id="SSF46992">
    <property type="entry name" value="Ribosomal protein S20"/>
    <property type="match status" value="1"/>
</dbReference>
<reference key="1">
    <citation type="submission" date="2008-10" db="EMBL/GenBank/DDBJ databases">
        <title>Genome sequence of Bacillus cereus AH820.</title>
        <authorList>
            <person name="Dodson R.J."/>
            <person name="Durkin A.S."/>
            <person name="Rosovitz M.J."/>
            <person name="Rasko D.A."/>
            <person name="Hoffmaster A."/>
            <person name="Ravel J."/>
            <person name="Sutton G."/>
        </authorList>
    </citation>
    <scope>NUCLEOTIDE SEQUENCE [LARGE SCALE GENOMIC DNA]</scope>
    <source>
        <strain>AH820</strain>
    </source>
</reference>
<proteinExistence type="inferred from homology"/>
<gene>
    <name evidence="1" type="primary">rpsT</name>
    <name type="ordered locus">BCAH820_4344</name>
</gene>
<evidence type="ECO:0000255" key="1">
    <source>
        <dbReference type="HAMAP-Rule" id="MF_00500"/>
    </source>
</evidence>
<evidence type="ECO:0000256" key="2">
    <source>
        <dbReference type="SAM" id="MobiDB-lite"/>
    </source>
</evidence>
<evidence type="ECO:0000305" key="3"/>
<protein>
    <recommendedName>
        <fullName evidence="1">Small ribosomal subunit protein bS20</fullName>
    </recommendedName>
    <alternativeName>
        <fullName evidence="3">30S ribosomal protein S20</fullName>
    </alternativeName>
</protein>
<comment type="function">
    <text evidence="1">Binds directly to 16S ribosomal RNA.</text>
</comment>
<comment type="similarity">
    <text evidence="1">Belongs to the bacterial ribosomal protein bS20 family.</text>
</comment>
<name>RS20_BACC0</name>